<reference key="1">
    <citation type="journal article" date="2005" name="PLoS Biol.">
        <title>The Wolbachia genome of Brugia malayi: endosymbiont evolution within a human pathogenic nematode.</title>
        <authorList>
            <person name="Foster J."/>
            <person name="Ganatra M."/>
            <person name="Kamal I."/>
            <person name="Ware J."/>
            <person name="Makarova K."/>
            <person name="Ivanova N."/>
            <person name="Bhattacharyya A."/>
            <person name="Kapatral V."/>
            <person name="Kumar S."/>
            <person name="Posfai J."/>
            <person name="Vincze T."/>
            <person name="Ingram J."/>
            <person name="Moran L."/>
            <person name="Lapidus A."/>
            <person name="Omelchenko M."/>
            <person name="Kyrpides N."/>
            <person name="Ghedin E."/>
            <person name="Wang S."/>
            <person name="Goltsman E."/>
            <person name="Joukov V."/>
            <person name="Ostrovskaya O."/>
            <person name="Tsukerman K."/>
            <person name="Mazur M."/>
            <person name="Comb D."/>
            <person name="Koonin E."/>
            <person name="Slatko B."/>
        </authorList>
    </citation>
    <scope>NUCLEOTIDE SEQUENCE [LARGE SCALE GENOMIC DNA]</scope>
    <source>
        <strain>TRS</strain>
    </source>
</reference>
<feature type="chain" id="PRO_0000354306" description="Small ribosomal subunit protein uS19">
    <location>
        <begin position="1"/>
        <end position="94"/>
    </location>
</feature>
<name>RS19_WOLTR</name>
<accession>Q5GSU8</accession>
<proteinExistence type="inferred from homology"/>
<sequence length="94" mass="10545">MSRSAWKPPFCHPSVLRLVNRALKQGSINKVIKIHSRASVILPNCLGLKFAVYNGKDYIPVSVNDQNMIGHKFGEFSPTRKFAGHNGDKKAVRR</sequence>
<evidence type="ECO:0000255" key="1">
    <source>
        <dbReference type="HAMAP-Rule" id="MF_00531"/>
    </source>
</evidence>
<evidence type="ECO:0000305" key="2"/>
<keyword id="KW-1185">Reference proteome</keyword>
<keyword id="KW-0687">Ribonucleoprotein</keyword>
<keyword id="KW-0689">Ribosomal protein</keyword>
<keyword id="KW-0694">RNA-binding</keyword>
<keyword id="KW-0699">rRNA-binding</keyword>
<gene>
    <name evidence="1" type="primary">rpsS</name>
    <name type="ordered locus">Wbm0337</name>
</gene>
<organism>
    <name type="scientific">Wolbachia sp. subsp. Brugia malayi (strain TRS)</name>
    <dbReference type="NCBI Taxonomy" id="292805"/>
    <lineage>
        <taxon>Bacteria</taxon>
        <taxon>Pseudomonadati</taxon>
        <taxon>Pseudomonadota</taxon>
        <taxon>Alphaproteobacteria</taxon>
        <taxon>Rickettsiales</taxon>
        <taxon>Anaplasmataceae</taxon>
        <taxon>Wolbachieae</taxon>
        <taxon>Wolbachia</taxon>
    </lineage>
</organism>
<comment type="function">
    <text evidence="1">Protein S19 forms a complex with S13 that binds strongly to the 16S ribosomal RNA.</text>
</comment>
<comment type="similarity">
    <text evidence="1">Belongs to the universal ribosomal protein uS19 family.</text>
</comment>
<dbReference type="EMBL" id="AE017321">
    <property type="protein sequence ID" value="AAW70926.1"/>
    <property type="molecule type" value="Genomic_DNA"/>
</dbReference>
<dbReference type="RefSeq" id="WP_011256536.1">
    <property type="nucleotide sequence ID" value="NC_006833.1"/>
</dbReference>
<dbReference type="SMR" id="Q5GSU8"/>
<dbReference type="STRING" id="292805.Wbm0337"/>
<dbReference type="KEGG" id="wbm:Wbm0337"/>
<dbReference type="eggNOG" id="COG0185">
    <property type="taxonomic scope" value="Bacteria"/>
</dbReference>
<dbReference type="HOGENOM" id="CLU_144911_0_1_5"/>
<dbReference type="Proteomes" id="UP000000534">
    <property type="component" value="Chromosome"/>
</dbReference>
<dbReference type="GO" id="GO:0005737">
    <property type="term" value="C:cytoplasm"/>
    <property type="evidence" value="ECO:0007669"/>
    <property type="project" value="UniProtKB-ARBA"/>
</dbReference>
<dbReference type="GO" id="GO:0015935">
    <property type="term" value="C:small ribosomal subunit"/>
    <property type="evidence" value="ECO:0007669"/>
    <property type="project" value="InterPro"/>
</dbReference>
<dbReference type="GO" id="GO:0019843">
    <property type="term" value="F:rRNA binding"/>
    <property type="evidence" value="ECO:0007669"/>
    <property type="project" value="UniProtKB-UniRule"/>
</dbReference>
<dbReference type="GO" id="GO:0003735">
    <property type="term" value="F:structural constituent of ribosome"/>
    <property type="evidence" value="ECO:0007669"/>
    <property type="project" value="InterPro"/>
</dbReference>
<dbReference type="GO" id="GO:0000028">
    <property type="term" value="P:ribosomal small subunit assembly"/>
    <property type="evidence" value="ECO:0007669"/>
    <property type="project" value="TreeGrafter"/>
</dbReference>
<dbReference type="GO" id="GO:0006412">
    <property type="term" value="P:translation"/>
    <property type="evidence" value="ECO:0007669"/>
    <property type="project" value="UniProtKB-UniRule"/>
</dbReference>
<dbReference type="FunFam" id="3.30.860.10:FF:000001">
    <property type="entry name" value="30S ribosomal protein S19"/>
    <property type="match status" value="1"/>
</dbReference>
<dbReference type="Gene3D" id="3.30.860.10">
    <property type="entry name" value="30s Ribosomal Protein S19, Chain A"/>
    <property type="match status" value="1"/>
</dbReference>
<dbReference type="HAMAP" id="MF_00531">
    <property type="entry name" value="Ribosomal_uS19"/>
    <property type="match status" value="1"/>
</dbReference>
<dbReference type="InterPro" id="IPR002222">
    <property type="entry name" value="Ribosomal_uS19"/>
</dbReference>
<dbReference type="InterPro" id="IPR005732">
    <property type="entry name" value="Ribosomal_uS19_bac-type"/>
</dbReference>
<dbReference type="InterPro" id="IPR023575">
    <property type="entry name" value="Ribosomal_uS19_SF"/>
</dbReference>
<dbReference type="NCBIfam" id="TIGR01050">
    <property type="entry name" value="rpsS_bact"/>
    <property type="match status" value="1"/>
</dbReference>
<dbReference type="PANTHER" id="PTHR11880">
    <property type="entry name" value="RIBOSOMAL PROTEIN S19P FAMILY MEMBER"/>
    <property type="match status" value="1"/>
</dbReference>
<dbReference type="PANTHER" id="PTHR11880:SF8">
    <property type="entry name" value="SMALL RIBOSOMAL SUBUNIT PROTEIN US19M"/>
    <property type="match status" value="1"/>
</dbReference>
<dbReference type="Pfam" id="PF00203">
    <property type="entry name" value="Ribosomal_S19"/>
    <property type="match status" value="1"/>
</dbReference>
<dbReference type="PIRSF" id="PIRSF002144">
    <property type="entry name" value="Ribosomal_S19"/>
    <property type="match status" value="1"/>
</dbReference>
<dbReference type="PRINTS" id="PR00975">
    <property type="entry name" value="RIBOSOMALS19"/>
</dbReference>
<dbReference type="SUPFAM" id="SSF54570">
    <property type="entry name" value="Ribosomal protein S19"/>
    <property type="match status" value="1"/>
</dbReference>
<protein>
    <recommendedName>
        <fullName evidence="1">Small ribosomal subunit protein uS19</fullName>
    </recommendedName>
    <alternativeName>
        <fullName evidence="2">30S ribosomal protein S19</fullName>
    </alternativeName>
</protein>